<comment type="function">
    <text evidence="1">Catalyzes the ATP- as well as the pyrophosphate-dependent phosphorylation of a specific serine residue in HPr, a phosphocarrier protein of the phosphoenolpyruvate-dependent sugar phosphotransferase system (PTS). HprK/P also catalyzes the pyrophosphate-producing, inorganic phosphate-dependent dephosphorylation (phosphorolysis) of seryl-phosphorylated HPr (P-Ser-HPr).</text>
</comment>
<comment type="catalytic activity">
    <reaction evidence="1">
        <text>[HPr protein]-L-serine + ATP = [HPr protein]-O-phospho-L-serine + ADP + H(+)</text>
        <dbReference type="Rhea" id="RHEA:46600"/>
        <dbReference type="Rhea" id="RHEA-COMP:11602"/>
        <dbReference type="Rhea" id="RHEA-COMP:11603"/>
        <dbReference type="ChEBI" id="CHEBI:15378"/>
        <dbReference type="ChEBI" id="CHEBI:29999"/>
        <dbReference type="ChEBI" id="CHEBI:30616"/>
        <dbReference type="ChEBI" id="CHEBI:83421"/>
        <dbReference type="ChEBI" id="CHEBI:456216"/>
    </reaction>
</comment>
<comment type="catalytic activity">
    <reaction evidence="1">
        <text>[HPr protein]-O-phospho-L-serine + phosphate + H(+) = [HPr protein]-L-serine + diphosphate</text>
        <dbReference type="Rhea" id="RHEA:46604"/>
        <dbReference type="Rhea" id="RHEA-COMP:11602"/>
        <dbReference type="Rhea" id="RHEA-COMP:11603"/>
        <dbReference type="ChEBI" id="CHEBI:15378"/>
        <dbReference type="ChEBI" id="CHEBI:29999"/>
        <dbReference type="ChEBI" id="CHEBI:33019"/>
        <dbReference type="ChEBI" id="CHEBI:43474"/>
        <dbReference type="ChEBI" id="CHEBI:83421"/>
    </reaction>
</comment>
<comment type="cofactor">
    <cofactor evidence="1">
        <name>Mg(2+)</name>
        <dbReference type="ChEBI" id="CHEBI:18420"/>
    </cofactor>
</comment>
<comment type="subunit">
    <text evidence="1">Homohexamer.</text>
</comment>
<comment type="domain">
    <text evidence="1">The Walker A ATP-binding motif also binds Pi and PPi.</text>
</comment>
<comment type="miscellaneous">
    <text evidence="1">Both phosphorylation and phosphorolysis are carried out by the same active site and suggest a common mechanism for both reactions.</text>
</comment>
<comment type="similarity">
    <text evidence="1">Belongs to the HPrK/P family.</text>
</comment>
<keyword id="KW-0067">ATP-binding</keyword>
<keyword id="KW-0418">Kinase</keyword>
<keyword id="KW-0460">Magnesium</keyword>
<keyword id="KW-0479">Metal-binding</keyword>
<keyword id="KW-0511">Multifunctional enzyme</keyword>
<keyword id="KW-0547">Nucleotide-binding</keyword>
<keyword id="KW-0723">Serine/threonine-protein kinase</keyword>
<keyword id="KW-0808">Transferase</keyword>
<gene>
    <name evidence="1" type="primary">hprK</name>
    <name type="ordered locus">Bcen_2180</name>
</gene>
<evidence type="ECO:0000255" key="1">
    <source>
        <dbReference type="HAMAP-Rule" id="MF_01249"/>
    </source>
</evidence>
<dbReference type="EC" id="2.7.11.-" evidence="1"/>
<dbReference type="EC" id="2.7.4.-" evidence="1"/>
<dbReference type="EMBL" id="CP000378">
    <property type="protein sequence ID" value="ABF77081.1"/>
    <property type="molecule type" value="Genomic_DNA"/>
</dbReference>
<dbReference type="SMR" id="Q1BTH4"/>
<dbReference type="HOGENOM" id="CLU_052030_0_2_4"/>
<dbReference type="GO" id="GO:0005524">
    <property type="term" value="F:ATP binding"/>
    <property type="evidence" value="ECO:0007669"/>
    <property type="project" value="UniProtKB-UniRule"/>
</dbReference>
<dbReference type="GO" id="GO:0000287">
    <property type="term" value="F:magnesium ion binding"/>
    <property type="evidence" value="ECO:0007669"/>
    <property type="project" value="UniProtKB-UniRule"/>
</dbReference>
<dbReference type="GO" id="GO:0000155">
    <property type="term" value="F:phosphorelay sensor kinase activity"/>
    <property type="evidence" value="ECO:0007669"/>
    <property type="project" value="InterPro"/>
</dbReference>
<dbReference type="GO" id="GO:0004674">
    <property type="term" value="F:protein serine/threonine kinase activity"/>
    <property type="evidence" value="ECO:0007669"/>
    <property type="project" value="UniProtKB-KW"/>
</dbReference>
<dbReference type="GO" id="GO:0004712">
    <property type="term" value="F:protein serine/threonine/tyrosine kinase activity"/>
    <property type="evidence" value="ECO:0007669"/>
    <property type="project" value="UniProtKB-UniRule"/>
</dbReference>
<dbReference type="GO" id="GO:0006109">
    <property type="term" value="P:regulation of carbohydrate metabolic process"/>
    <property type="evidence" value="ECO:0007669"/>
    <property type="project" value="UniProtKB-UniRule"/>
</dbReference>
<dbReference type="CDD" id="cd01918">
    <property type="entry name" value="HprK_C"/>
    <property type="match status" value="1"/>
</dbReference>
<dbReference type="FunFam" id="3.40.50.300:FF:000174">
    <property type="entry name" value="HPr kinase/phosphorylase"/>
    <property type="match status" value="1"/>
</dbReference>
<dbReference type="Gene3D" id="3.40.1390.20">
    <property type="entry name" value="HprK N-terminal domain-like"/>
    <property type="match status" value="1"/>
</dbReference>
<dbReference type="Gene3D" id="3.40.50.300">
    <property type="entry name" value="P-loop containing nucleotide triphosphate hydrolases"/>
    <property type="match status" value="1"/>
</dbReference>
<dbReference type="HAMAP" id="MF_01249">
    <property type="entry name" value="HPr_kinase"/>
    <property type="match status" value="1"/>
</dbReference>
<dbReference type="InterPro" id="IPR003755">
    <property type="entry name" value="HPr(Ser)_kin/Pase"/>
</dbReference>
<dbReference type="InterPro" id="IPR011104">
    <property type="entry name" value="Hpr_kin/Pase_C"/>
</dbReference>
<dbReference type="InterPro" id="IPR011126">
    <property type="entry name" value="Hpr_kin/Pase_Hpr_N"/>
</dbReference>
<dbReference type="InterPro" id="IPR027417">
    <property type="entry name" value="P-loop_NTPase"/>
</dbReference>
<dbReference type="InterPro" id="IPR028979">
    <property type="entry name" value="Ser_kin/Pase_Hpr-like_N_sf"/>
</dbReference>
<dbReference type="NCBIfam" id="TIGR00679">
    <property type="entry name" value="hpr-ser"/>
    <property type="match status" value="1"/>
</dbReference>
<dbReference type="PANTHER" id="PTHR30305:SF1">
    <property type="entry name" value="HPR KINASE_PHOSPHORYLASE"/>
    <property type="match status" value="1"/>
</dbReference>
<dbReference type="PANTHER" id="PTHR30305">
    <property type="entry name" value="PROTEIN YJDM-RELATED"/>
    <property type="match status" value="1"/>
</dbReference>
<dbReference type="Pfam" id="PF07475">
    <property type="entry name" value="Hpr_kinase_C"/>
    <property type="match status" value="1"/>
</dbReference>
<dbReference type="Pfam" id="PF02603">
    <property type="entry name" value="Hpr_kinase_N"/>
    <property type="match status" value="1"/>
</dbReference>
<dbReference type="SUPFAM" id="SSF75138">
    <property type="entry name" value="HprK N-terminal domain-like"/>
    <property type="match status" value="1"/>
</dbReference>
<dbReference type="SUPFAM" id="SSF53795">
    <property type="entry name" value="PEP carboxykinase-like"/>
    <property type="match status" value="1"/>
</dbReference>
<feature type="chain" id="PRO_1000067127" description="HPr kinase/phosphorylase">
    <location>
        <begin position="1"/>
        <end position="322"/>
    </location>
</feature>
<feature type="region of interest" description="Important for the catalytic mechanism of both phosphorylation and dephosphorylation" evidence="1">
    <location>
        <begin position="209"/>
        <end position="218"/>
    </location>
</feature>
<feature type="region of interest" description="Important for the catalytic mechanism of dephosphorylation" evidence="1">
    <location>
        <begin position="271"/>
        <end position="276"/>
    </location>
</feature>
<feature type="active site" evidence="1">
    <location>
        <position position="146"/>
    </location>
</feature>
<feature type="active site" evidence="1">
    <location>
        <position position="167"/>
    </location>
</feature>
<feature type="active site" description="Proton acceptor; for phosphorylation activity. Proton donor; for dephosphorylation activity" evidence="1">
    <location>
        <position position="185"/>
    </location>
</feature>
<feature type="active site" evidence="1">
    <location>
        <position position="250"/>
    </location>
</feature>
<feature type="binding site" evidence="1">
    <location>
        <begin position="161"/>
        <end position="168"/>
    </location>
    <ligand>
        <name>ATP</name>
        <dbReference type="ChEBI" id="CHEBI:30616"/>
    </ligand>
</feature>
<feature type="binding site" evidence="1">
    <location>
        <position position="168"/>
    </location>
    <ligand>
        <name>Mg(2+)</name>
        <dbReference type="ChEBI" id="CHEBI:18420"/>
    </ligand>
</feature>
<feature type="binding site" evidence="1">
    <location>
        <position position="210"/>
    </location>
    <ligand>
        <name>Mg(2+)</name>
        <dbReference type="ChEBI" id="CHEBI:18420"/>
    </ligand>
</feature>
<organism>
    <name type="scientific">Burkholderia orbicola (strain AU 1054)</name>
    <dbReference type="NCBI Taxonomy" id="331271"/>
    <lineage>
        <taxon>Bacteria</taxon>
        <taxon>Pseudomonadati</taxon>
        <taxon>Pseudomonadota</taxon>
        <taxon>Betaproteobacteria</taxon>
        <taxon>Burkholderiales</taxon>
        <taxon>Burkholderiaceae</taxon>
        <taxon>Burkholderia</taxon>
        <taxon>Burkholderia cepacia complex</taxon>
        <taxon>Burkholderia orbicola</taxon>
    </lineage>
</organism>
<name>HPRK_BURO1</name>
<reference key="1">
    <citation type="submission" date="2006-05" db="EMBL/GenBank/DDBJ databases">
        <title>Complete sequence of chromosome 1 of Burkholderia cenocepacia AU 1054.</title>
        <authorList>
            <consortium name="US DOE Joint Genome Institute"/>
            <person name="Copeland A."/>
            <person name="Lucas S."/>
            <person name="Lapidus A."/>
            <person name="Barry K."/>
            <person name="Detter J.C."/>
            <person name="Glavina del Rio T."/>
            <person name="Hammon N."/>
            <person name="Israni S."/>
            <person name="Dalin E."/>
            <person name="Tice H."/>
            <person name="Pitluck S."/>
            <person name="Chain P."/>
            <person name="Malfatti S."/>
            <person name="Shin M."/>
            <person name="Vergez L."/>
            <person name="Schmutz J."/>
            <person name="Larimer F."/>
            <person name="Land M."/>
            <person name="Hauser L."/>
            <person name="Kyrpides N."/>
            <person name="Lykidis A."/>
            <person name="LiPuma J.J."/>
            <person name="Konstantinidis K."/>
            <person name="Tiedje J.M."/>
            <person name="Richardson P."/>
        </authorList>
    </citation>
    <scope>NUCLEOTIDE SEQUENCE [LARGE SCALE GENOMIC DNA]</scope>
    <source>
        <strain>AU 1054</strain>
    </source>
</reference>
<accession>Q1BTH4</accession>
<sequence length="322" mass="35121">MDTSSINAQSIFDDNAATLKLSWLTGHEGWERGFSADTVGNATSSADLVGHLNLIHPNRIQVLGEAEIDYYQRQTDEDRSRHMAELIALEPPFLVVAGGAAAPPELVLRCTRSSTPLFTTPMSAAAVIDSLRLYMSRILAPRATLHGVFLDILGMGVLLTGDSGLGKSELGLELISRGHGLVADDAVDFVRLGPDFVEGRCPPLLQNLLEVRGLGLLDIKTIFGETAVRRKMKLKLIVQLVRRPDGEFQRLPLESQTVDVLGLPISKVTIQVAAGRNLAVLVEAAVRNTILQLRGIDTLRDFMDRQRLAMQDPDSQFPGKLV</sequence>
<protein>
    <recommendedName>
        <fullName evidence="1">HPr kinase/phosphorylase</fullName>
        <shortName evidence="1">HPrK/P</shortName>
        <ecNumber evidence="1">2.7.11.-</ecNumber>
        <ecNumber evidence="1">2.7.4.-</ecNumber>
    </recommendedName>
    <alternativeName>
        <fullName evidence="1">HPr(Ser) kinase/phosphorylase</fullName>
    </alternativeName>
</protein>
<proteinExistence type="inferred from homology"/>